<accession>Q3YYZ8</accession>
<dbReference type="EC" id="6.3.5.3" evidence="1"/>
<dbReference type="EMBL" id="CP000038">
    <property type="protein sequence ID" value="AAZ89264.1"/>
    <property type="molecule type" value="Genomic_DNA"/>
</dbReference>
<dbReference type="RefSeq" id="WP_000970088.1">
    <property type="nucleotide sequence ID" value="NC_007384.1"/>
</dbReference>
<dbReference type="SMR" id="Q3YYZ8"/>
<dbReference type="GeneID" id="93774578"/>
<dbReference type="KEGG" id="ssn:SSON_2640"/>
<dbReference type="HOGENOM" id="CLU_001031_0_2_6"/>
<dbReference type="UniPathway" id="UPA00074">
    <property type="reaction ID" value="UER00128"/>
</dbReference>
<dbReference type="Proteomes" id="UP000002529">
    <property type="component" value="Chromosome"/>
</dbReference>
<dbReference type="GO" id="GO:0005737">
    <property type="term" value="C:cytoplasm"/>
    <property type="evidence" value="ECO:0007669"/>
    <property type="project" value="UniProtKB-SubCell"/>
</dbReference>
<dbReference type="GO" id="GO:0005524">
    <property type="term" value="F:ATP binding"/>
    <property type="evidence" value="ECO:0007669"/>
    <property type="project" value="UniProtKB-UniRule"/>
</dbReference>
<dbReference type="GO" id="GO:0046872">
    <property type="term" value="F:metal ion binding"/>
    <property type="evidence" value="ECO:0007669"/>
    <property type="project" value="UniProtKB-KW"/>
</dbReference>
<dbReference type="GO" id="GO:0004642">
    <property type="term" value="F:phosphoribosylformylglycinamidine synthase activity"/>
    <property type="evidence" value="ECO:0007669"/>
    <property type="project" value="UniProtKB-UniRule"/>
</dbReference>
<dbReference type="GO" id="GO:0006189">
    <property type="term" value="P:'de novo' IMP biosynthetic process"/>
    <property type="evidence" value="ECO:0007669"/>
    <property type="project" value="UniProtKB-UniRule"/>
</dbReference>
<dbReference type="CDD" id="cd01740">
    <property type="entry name" value="GATase1_FGAR_AT"/>
    <property type="match status" value="1"/>
</dbReference>
<dbReference type="CDD" id="cd02203">
    <property type="entry name" value="PurL_repeat1"/>
    <property type="match status" value="1"/>
</dbReference>
<dbReference type="FunFam" id="1.10.8.750:FF:000002">
    <property type="entry name" value="Phosphoribosylformylglycinamidine synthase"/>
    <property type="match status" value="1"/>
</dbReference>
<dbReference type="FunFam" id="3.30.1330.10:FF:000002">
    <property type="entry name" value="Phosphoribosylformylglycinamidine synthase"/>
    <property type="match status" value="1"/>
</dbReference>
<dbReference type="FunFam" id="3.30.1330.10:FF:000005">
    <property type="entry name" value="Phosphoribosylformylglycinamidine synthase"/>
    <property type="match status" value="1"/>
</dbReference>
<dbReference type="FunFam" id="3.40.50.880:FF:000008">
    <property type="entry name" value="Phosphoribosylformylglycinamidine synthase"/>
    <property type="match status" value="1"/>
</dbReference>
<dbReference type="FunFam" id="3.90.650.10:FF:000002">
    <property type="entry name" value="Phosphoribosylformylglycinamidine synthase"/>
    <property type="match status" value="1"/>
</dbReference>
<dbReference type="FunFam" id="3.90.650.10:FF:000005">
    <property type="entry name" value="Phosphoribosylformylglycinamidine synthase"/>
    <property type="match status" value="1"/>
</dbReference>
<dbReference type="Gene3D" id="3.40.50.880">
    <property type="match status" value="1"/>
</dbReference>
<dbReference type="Gene3D" id="1.10.8.750">
    <property type="entry name" value="Phosphoribosylformylglycinamidine synthase, linker domain"/>
    <property type="match status" value="1"/>
</dbReference>
<dbReference type="Gene3D" id="3.90.650.10">
    <property type="entry name" value="PurM-like C-terminal domain"/>
    <property type="match status" value="2"/>
</dbReference>
<dbReference type="Gene3D" id="3.30.1330.10">
    <property type="entry name" value="PurM-like, N-terminal domain"/>
    <property type="match status" value="2"/>
</dbReference>
<dbReference type="HAMAP" id="MF_00419">
    <property type="entry name" value="PurL_1"/>
    <property type="match status" value="1"/>
</dbReference>
<dbReference type="InterPro" id="IPR029062">
    <property type="entry name" value="Class_I_gatase-like"/>
</dbReference>
<dbReference type="InterPro" id="IPR040707">
    <property type="entry name" value="FGAR-AT_N"/>
</dbReference>
<dbReference type="InterPro" id="IPR055181">
    <property type="entry name" value="FGAR-AT_PurM_N-like"/>
</dbReference>
<dbReference type="InterPro" id="IPR010073">
    <property type="entry name" value="PurL_large"/>
</dbReference>
<dbReference type="InterPro" id="IPR041609">
    <property type="entry name" value="PurL_linker"/>
</dbReference>
<dbReference type="InterPro" id="IPR010918">
    <property type="entry name" value="PurM-like_C_dom"/>
</dbReference>
<dbReference type="InterPro" id="IPR036676">
    <property type="entry name" value="PurM-like_C_sf"/>
</dbReference>
<dbReference type="InterPro" id="IPR036921">
    <property type="entry name" value="PurM-like_N_sf"/>
</dbReference>
<dbReference type="InterPro" id="IPR036604">
    <property type="entry name" value="PurS-like_sf"/>
</dbReference>
<dbReference type="NCBIfam" id="TIGR01735">
    <property type="entry name" value="FGAM_synt"/>
    <property type="match status" value="1"/>
</dbReference>
<dbReference type="NCBIfam" id="NF003672">
    <property type="entry name" value="PRK05297.1"/>
    <property type="match status" value="1"/>
</dbReference>
<dbReference type="PANTHER" id="PTHR10099">
    <property type="entry name" value="PHOSPHORIBOSYLFORMYLGLYCINAMIDINE SYNTHASE"/>
    <property type="match status" value="1"/>
</dbReference>
<dbReference type="PANTHER" id="PTHR10099:SF1">
    <property type="entry name" value="PHOSPHORIBOSYLFORMYLGLYCINAMIDINE SYNTHASE"/>
    <property type="match status" value="1"/>
</dbReference>
<dbReference type="Pfam" id="PF02769">
    <property type="entry name" value="AIRS_C"/>
    <property type="match status" value="2"/>
</dbReference>
<dbReference type="Pfam" id="PF18072">
    <property type="entry name" value="FGAR-AT_linker"/>
    <property type="match status" value="1"/>
</dbReference>
<dbReference type="Pfam" id="PF18076">
    <property type="entry name" value="FGAR-AT_N"/>
    <property type="match status" value="1"/>
</dbReference>
<dbReference type="Pfam" id="PF22689">
    <property type="entry name" value="FGAR-AT_PurM_N-like"/>
    <property type="match status" value="1"/>
</dbReference>
<dbReference type="Pfam" id="PF13507">
    <property type="entry name" value="GATase_5"/>
    <property type="match status" value="1"/>
</dbReference>
<dbReference type="SMART" id="SM01211">
    <property type="entry name" value="GATase_5"/>
    <property type="match status" value="1"/>
</dbReference>
<dbReference type="SUPFAM" id="SSF52317">
    <property type="entry name" value="Class I glutamine amidotransferase-like"/>
    <property type="match status" value="1"/>
</dbReference>
<dbReference type="SUPFAM" id="SSF109736">
    <property type="entry name" value="FGAM synthase PurL, linker domain"/>
    <property type="match status" value="1"/>
</dbReference>
<dbReference type="SUPFAM" id="SSF56042">
    <property type="entry name" value="PurM C-terminal domain-like"/>
    <property type="match status" value="2"/>
</dbReference>
<dbReference type="SUPFAM" id="SSF55326">
    <property type="entry name" value="PurM N-terminal domain-like"/>
    <property type="match status" value="2"/>
</dbReference>
<dbReference type="SUPFAM" id="SSF82697">
    <property type="entry name" value="PurS-like"/>
    <property type="match status" value="1"/>
</dbReference>
<dbReference type="PROSITE" id="PS51273">
    <property type="entry name" value="GATASE_TYPE_1"/>
    <property type="match status" value="1"/>
</dbReference>
<keyword id="KW-0067">ATP-binding</keyword>
<keyword id="KW-0963">Cytoplasm</keyword>
<keyword id="KW-0315">Glutamine amidotransferase</keyword>
<keyword id="KW-0436">Ligase</keyword>
<keyword id="KW-0460">Magnesium</keyword>
<keyword id="KW-0479">Metal-binding</keyword>
<keyword id="KW-0547">Nucleotide-binding</keyword>
<keyword id="KW-0658">Purine biosynthesis</keyword>
<keyword id="KW-1185">Reference proteome</keyword>
<comment type="function">
    <text evidence="1">Phosphoribosylformylglycinamidine synthase involved in the purines biosynthetic pathway. Catalyzes the ATP-dependent conversion of formylglycinamide ribonucleotide (FGAR) and glutamine to yield formylglycinamidine ribonucleotide (FGAM) and glutamate.</text>
</comment>
<comment type="catalytic activity">
    <reaction evidence="1">
        <text>N(2)-formyl-N(1)-(5-phospho-beta-D-ribosyl)glycinamide + L-glutamine + ATP + H2O = 2-formamido-N(1)-(5-O-phospho-beta-D-ribosyl)acetamidine + L-glutamate + ADP + phosphate + H(+)</text>
        <dbReference type="Rhea" id="RHEA:17129"/>
        <dbReference type="ChEBI" id="CHEBI:15377"/>
        <dbReference type="ChEBI" id="CHEBI:15378"/>
        <dbReference type="ChEBI" id="CHEBI:29985"/>
        <dbReference type="ChEBI" id="CHEBI:30616"/>
        <dbReference type="ChEBI" id="CHEBI:43474"/>
        <dbReference type="ChEBI" id="CHEBI:58359"/>
        <dbReference type="ChEBI" id="CHEBI:147286"/>
        <dbReference type="ChEBI" id="CHEBI:147287"/>
        <dbReference type="ChEBI" id="CHEBI:456216"/>
        <dbReference type="EC" id="6.3.5.3"/>
    </reaction>
</comment>
<comment type="pathway">
    <text evidence="1">Purine metabolism; IMP biosynthesis via de novo pathway; 5-amino-1-(5-phospho-D-ribosyl)imidazole from N(2)-formyl-N(1)-(5-phospho-D-ribosyl)glycinamide: step 1/2.</text>
</comment>
<comment type="subunit">
    <text evidence="1">Monomer.</text>
</comment>
<comment type="subcellular location">
    <subcellularLocation>
        <location evidence="1">Cytoplasm</location>
    </subcellularLocation>
</comment>
<comment type="similarity">
    <text evidence="1">In the N-terminal section; belongs to the FGAMS family.</text>
</comment>
<feature type="chain" id="PRO_0000264599" description="Phosphoribosylformylglycinamidine synthase">
    <location>
        <begin position="1"/>
        <end position="1295"/>
    </location>
</feature>
<feature type="domain" description="Glutamine amidotransferase type-1" evidence="1">
    <location>
        <begin position="1042"/>
        <end position="1295"/>
    </location>
</feature>
<feature type="region of interest" description="Disordered" evidence="2">
    <location>
        <begin position="305"/>
        <end position="327"/>
    </location>
</feature>
<feature type="active site" description="Nucleophile" evidence="1">
    <location>
        <position position="1135"/>
    </location>
</feature>
<feature type="active site" evidence="1">
    <location>
        <position position="1260"/>
    </location>
</feature>
<feature type="active site" evidence="1">
    <location>
        <position position="1262"/>
    </location>
</feature>
<feature type="binding site" evidence="1">
    <location>
        <begin position="307"/>
        <end position="318"/>
    </location>
    <ligand>
        <name>ATP</name>
        <dbReference type="ChEBI" id="CHEBI:30616"/>
    </ligand>
</feature>
<feature type="binding site" evidence="1">
    <location>
        <position position="678"/>
    </location>
    <ligand>
        <name>ATP</name>
        <dbReference type="ChEBI" id="CHEBI:30616"/>
    </ligand>
</feature>
<feature type="binding site" evidence="1">
    <location>
        <position position="718"/>
    </location>
    <ligand>
        <name>Mg(2+)</name>
        <dbReference type="ChEBI" id="CHEBI:18420"/>
    </ligand>
</feature>
<feature type="binding site" evidence="1">
    <location>
        <position position="722"/>
    </location>
    <ligand>
        <name>Mg(2+)</name>
        <dbReference type="ChEBI" id="CHEBI:18420"/>
    </ligand>
</feature>
<feature type="binding site" evidence="1">
    <location>
        <position position="884"/>
    </location>
    <ligand>
        <name>Mg(2+)</name>
        <dbReference type="ChEBI" id="CHEBI:18420"/>
    </ligand>
</feature>
<feature type="binding site" evidence="1">
    <location>
        <position position="886"/>
    </location>
    <ligand>
        <name>ATP</name>
        <dbReference type="ChEBI" id="CHEBI:30616"/>
    </ligand>
</feature>
<protein>
    <recommendedName>
        <fullName evidence="1">Phosphoribosylformylglycinamidine synthase</fullName>
        <shortName evidence="1">FGAM synthase</shortName>
        <shortName evidence="1">FGAMS</shortName>
        <ecNumber evidence="1">6.3.5.3</ecNumber>
    </recommendedName>
    <alternativeName>
        <fullName evidence="1">Formylglycinamide ribonucleotide amidotransferase</fullName>
        <shortName evidence="1">FGAR amidotransferase</shortName>
        <shortName evidence="1">FGAR-AT</shortName>
    </alternativeName>
</protein>
<reference key="1">
    <citation type="journal article" date="2005" name="Nucleic Acids Res.">
        <title>Genome dynamics and diversity of Shigella species, the etiologic agents of bacillary dysentery.</title>
        <authorList>
            <person name="Yang F."/>
            <person name="Yang J."/>
            <person name="Zhang X."/>
            <person name="Chen L."/>
            <person name="Jiang Y."/>
            <person name="Yan Y."/>
            <person name="Tang X."/>
            <person name="Wang J."/>
            <person name="Xiong Z."/>
            <person name="Dong J."/>
            <person name="Xue Y."/>
            <person name="Zhu Y."/>
            <person name="Xu X."/>
            <person name="Sun L."/>
            <person name="Chen S."/>
            <person name="Nie H."/>
            <person name="Peng J."/>
            <person name="Xu J."/>
            <person name="Wang Y."/>
            <person name="Yuan Z."/>
            <person name="Wen Y."/>
            <person name="Yao Z."/>
            <person name="Shen Y."/>
            <person name="Qiang B."/>
            <person name="Hou Y."/>
            <person name="Yu J."/>
            <person name="Jin Q."/>
        </authorList>
    </citation>
    <scope>NUCLEOTIDE SEQUENCE [LARGE SCALE GENOMIC DNA]</scope>
    <source>
        <strain>Ss046</strain>
    </source>
</reference>
<organism>
    <name type="scientific">Shigella sonnei (strain Ss046)</name>
    <dbReference type="NCBI Taxonomy" id="300269"/>
    <lineage>
        <taxon>Bacteria</taxon>
        <taxon>Pseudomonadati</taxon>
        <taxon>Pseudomonadota</taxon>
        <taxon>Gammaproteobacteria</taxon>
        <taxon>Enterobacterales</taxon>
        <taxon>Enterobacteriaceae</taxon>
        <taxon>Shigella</taxon>
    </lineage>
</organism>
<proteinExistence type="inferred from homology"/>
<sequence length="1295" mass="141446">MMEILRGSPALSAFRINKLLARFQAARLPVHNIYAEYVHFADLNAPLNDDEHAQLERLLKYGPALASHAPQGKLLLVTPRPGTISPWSSKATDIAHNCGLQQVNRLERGVAYYIEAGTLTNEQWQQVTAELHDRMMETVFFALDDAEQLFAHHQPTPVTSVDLLGQGRQALIDANLRLGLALAEDEIDYLQDAFTKLGRNPNDIELYMFAQANSEHCRHKIFNADWIIDGEQQPKSLFKMIKNTFETTPDHVLSAYKDNAAVMEGSEVGRYFADHETGRYDFHQEPAHILMKVETHNHPTAISPWPGAATGSGGEIRDEGATGRGAKPKAGLVGFSVSNLRIPGFEQPWEEDFGKPERIVTALDIMTEGPLGGAAFNNEFGRPALNGYFRTYEEKVNSHNGEELRGYHKPIMLAGGIGNIRADHVQKGEINVGAKLVVLGGPAMNIGLGGGAASSMASGQSDADLDFASVQRDNPEMERRCQEVIDRCWQLGDANPILFIHDVGAGGLSNAMPELVSDGGRGGKFELRDILSDEPGMSPLEIWCNESQERYVLAVAADQLPLFDELCKRERAPYAVIGEATEELHLSLHDRHFDNQPIDLPLDVLLGKTPKMTRDVQTLKAKGDALVREGITIADAVKRVLHLPTVAEKTFLVTIGDRSVTGMVARDQMVGPWQVPVANCAVTTASLDSYYGEAMAIGERAPVALLDFAASARLAVGEALTNIAATQIGDIKRIKLSANWMAAAGHPGEDAGLYEAVKAVGEELCPALGLTIPVGKDSMSMKTRWQEGNEEREMTSPLSLVISAFARVEDVRHTITPQLSTEDNTLLLIDLGKGNNALGATALAQVYRQLGDKPADVRDVAQLKGFYDAIQALVAQRKLLAYHDRSDGGLLVTLAEMAFAGHCGINADIASLGDDRLAALFNEELGAVIQVRAADREAVESVLAQHGLADCVHYVGQAVSGDRFVITANGQTVFSESRTTLRVWWAETTWQMQRLRDNPECADQEHQAKSNDADPGLNVKLSFDINEDVAAPYIATGARPKVAVLREQGVNSHVEMAAAFHRAGFDAIDVHMSDLLTGRTGLEDFHALVACGGFSYGDVLGAGEGWAKSILFNDRVRDEFATFFHRPQTLALGVCNGCQMMSNLRELIPGSELWPRFVRNTSDRFEARFSLVEVTQSPSLLLQGMVGSQMPIAVSHGEGRVEVRDAAHLAALESKGLVALRYVDNFGKVTETYPANPNGSPNGITAVTTESGRVTIMMPHPERVFRTVSNSWHPENWGEDGPWMRIFRNARKQLG</sequence>
<evidence type="ECO:0000255" key="1">
    <source>
        <dbReference type="HAMAP-Rule" id="MF_00419"/>
    </source>
</evidence>
<evidence type="ECO:0000256" key="2">
    <source>
        <dbReference type="SAM" id="MobiDB-lite"/>
    </source>
</evidence>
<name>PUR4_SHISS</name>
<gene>
    <name evidence="1" type="primary">purL</name>
    <name type="ordered locus">SSON_2640</name>
</gene>